<evidence type="ECO:0000250" key="1"/>
<evidence type="ECO:0000255" key="2"/>
<evidence type="ECO:0000305" key="3"/>
<keyword id="KW-0997">Cell inner membrane</keyword>
<keyword id="KW-1003">Cell membrane</keyword>
<keyword id="KW-0175">Coiled coil</keyword>
<keyword id="KW-0472">Membrane</keyword>
<keyword id="KW-1185">Reference proteome</keyword>
<keyword id="KW-0812">Transmembrane</keyword>
<keyword id="KW-1133">Transmembrane helix</keyword>
<name>PSPB_ECOL6</name>
<comment type="function">
    <text evidence="1">The phage shock protein (psp) operon (pspABCDE) may play a significant role in the competition for survival under nutrient- or energy-limited conditions. PspB is involved in transcription regulation (By similarity).</text>
</comment>
<comment type="subcellular location">
    <subcellularLocation>
        <location evidence="1">Cell inner membrane</location>
        <topology evidence="1">Single-pass membrane protein</topology>
    </subcellularLocation>
</comment>
<comment type="similarity">
    <text evidence="3">Belongs to the PspB family.</text>
</comment>
<organism>
    <name type="scientific">Escherichia coli O6:H1 (strain CFT073 / ATCC 700928 / UPEC)</name>
    <dbReference type="NCBI Taxonomy" id="199310"/>
    <lineage>
        <taxon>Bacteria</taxon>
        <taxon>Pseudomonadati</taxon>
        <taxon>Pseudomonadota</taxon>
        <taxon>Gammaproteobacteria</taxon>
        <taxon>Enterobacterales</taxon>
        <taxon>Enterobacteriaceae</taxon>
        <taxon>Escherichia</taxon>
    </lineage>
</organism>
<sequence>MSALFLAIPLTIFVLFVLPIWLWLHYSNRSGRSELSQSEQQRLAQLADEAKRMRERIQALESILDAEHPNWRDR</sequence>
<dbReference type="EMBL" id="AE014075">
    <property type="protein sequence ID" value="AAN80241.1"/>
    <property type="molecule type" value="Genomic_DNA"/>
</dbReference>
<dbReference type="RefSeq" id="WP_001274963.1">
    <property type="nucleotide sequence ID" value="NZ_CP051263.1"/>
</dbReference>
<dbReference type="SMR" id="P0AFN0"/>
<dbReference type="STRING" id="199310.c1775"/>
<dbReference type="GeneID" id="75203420"/>
<dbReference type="KEGG" id="ecc:c1775"/>
<dbReference type="eggNOG" id="ENOG5032YI2">
    <property type="taxonomic scope" value="Bacteria"/>
</dbReference>
<dbReference type="HOGENOM" id="CLU_178570_0_0_6"/>
<dbReference type="BioCyc" id="ECOL199310:C1775-MONOMER"/>
<dbReference type="Proteomes" id="UP000001410">
    <property type="component" value="Chromosome"/>
</dbReference>
<dbReference type="GO" id="GO:0005886">
    <property type="term" value="C:plasma membrane"/>
    <property type="evidence" value="ECO:0007669"/>
    <property type="project" value="UniProtKB-SubCell"/>
</dbReference>
<dbReference type="GO" id="GO:0009271">
    <property type="term" value="P:phage shock"/>
    <property type="evidence" value="ECO:0007669"/>
    <property type="project" value="InterPro"/>
</dbReference>
<dbReference type="GO" id="GO:0006355">
    <property type="term" value="P:regulation of DNA-templated transcription"/>
    <property type="evidence" value="ECO:0007669"/>
    <property type="project" value="InterPro"/>
</dbReference>
<dbReference type="InterPro" id="IPR009554">
    <property type="entry name" value="Phageshock_PspB"/>
</dbReference>
<dbReference type="NCBIfam" id="TIGR02976">
    <property type="entry name" value="phageshock_pspB"/>
    <property type="match status" value="1"/>
</dbReference>
<dbReference type="NCBIfam" id="NF006993">
    <property type="entry name" value="PRK09458.1"/>
    <property type="match status" value="1"/>
</dbReference>
<dbReference type="Pfam" id="PF06667">
    <property type="entry name" value="PspB"/>
    <property type="match status" value="1"/>
</dbReference>
<gene>
    <name type="primary">pspB</name>
    <name type="ordered locus">c1775</name>
</gene>
<proteinExistence type="inferred from homology"/>
<reference key="1">
    <citation type="journal article" date="2002" name="Proc. Natl. Acad. Sci. U.S.A.">
        <title>Extensive mosaic structure revealed by the complete genome sequence of uropathogenic Escherichia coli.</title>
        <authorList>
            <person name="Welch R.A."/>
            <person name="Burland V."/>
            <person name="Plunkett G. III"/>
            <person name="Redford P."/>
            <person name="Roesch P."/>
            <person name="Rasko D."/>
            <person name="Buckles E.L."/>
            <person name="Liou S.-R."/>
            <person name="Boutin A."/>
            <person name="Hackett J."/>
            <person name="Stroud D."/>
            <person name="Mayhew G.F."/>
            <person name="Rose D.J."/>
            <person name="Zhou S."/>
            <person name="Schwartz D.C."/>
            <person name="Perna N.T."/>
            <person name="Mobley H.L.T."/>
            <person name="Donnenberg M.S."/>
            <person name="Blattner F.R."/>
        </authorList>
    </citation>
    <scope>NUCLEOTIDE SEQUENCE [LARGE SCALE GENOMIC DNA]</scope>
    <source>
        <strain>CFT073 / ATCC 700928 / UPEC</strain>
    </source>
</reference>
<accession>P0AFN0</accession>
<accession>P23854</accession>
<feature type="chain" id="PRO_0000097072" description="Phage shock protein B">
    <location>
        <begin position="1"/>
        <end position="74"/>
    </location>
</feature>
<feature type="transmembrane region" description="Helical" evidence="2">
    <location>
        <begin position="4"/>
        <end position="24"/>
    </location>
</feature>
<feature type="coiled-coil region" evidence="2">
    <location>
        <begin position="33"/>
        <end position="68"/>
    </location>
</feature>
<protein>
    <recommendedName>
        <fullName>Phage shock protein B</fullName>
    </recommendedName>
</protein>